<gene>
    <name evidence="1" type="primary">upp</name>
    <name type="ordered locus">BCE_5440</name>
</gene>
<comment type="function">
    <text evidence="1">Catalyzes the conversion of uracil and 5-phospho-alpha-D-ribose 1-diphosphate (PRPP) to UMP and diphosphate.</text>
</comment>
<comment type="catalytic activity">
    <reaction evidence="1">
        <text>UMP + diphosphate = 5-phospho-alpha-D-ribose 1-diphosphate + uracil</text>
        <dbReference type="Rhea" id="RHEA:13017"/>
        <dbReference type="ChEBI" id="CHEBI:17568"/>
        <dbReference type="ChEBI" id="CHEBI:33019"/>
        <dbReference type="ChEBI" id="CHEBI:57865"/>
        <dbReference type="ChEBI" id="CHEBI:58017"/>
        <dbReference type="EC" id="2.4.2.9"/>
    </reaction>
</comment>
<comment type="cofactor">
    <cofactor evidence="1">
        <name>Mg(2+)</name>
        <dbReference type="ChEBI" id="CHEBI:18420"/>
    </cofactor>
    <text evidence="1">Binds 1 Mg(2+) ion per subunit. The magnesium is bound as Mg-PRPP.</text>
</comment>
<comment type="activity regulation">
    <text evidence="1">Allosterically activated by GTP.</text>
</comment>
<comment type="pathway">
    <text evidence="1">Pyrimidine metabolism; UMP biosynthesis via salvage pathway; UMP from uracil: step 1/1.</text>
</comment>
<comment type="similarity">
    <text evidence="1">Belongs to the UPRTase family.</text>
</comment>
<protein>
    <recommendedName>
        <fullName evidence="1">Uracil phosphoribosyltransferase</fullName>
        <ecNumber evidence="1">2.4.2.9</ecNumber>
    </recommendedName>
    <alternativeName>
        <fullName evidence="1">UMP pyrophosphorylase</fullName>
    </alternativeName>
    <alternativeName>
        <fullName evidence="1">UPRTase</fullName>
    </alternativeName>
</protein>
<feature type="chain" id="PRO_0000120794" description="Uracil phosphoribosyltransferase">
    <location>
        <begin position="1"/>
        <end position="209"/>
    </location>
</feature>
<feature type="binding site" evidence="1">
    <location>
        <position position="79"/>
    </location>
    <ligand>
        <name>5-phospho-alpha-D-ribose 1-diphosphate</name>
        <dbReference type="ChEBI" id="CHEBI:58017"/>
    </ligand>
</feature>
<feature type="binding site" evidence="1">
    <location>
        <position position="104"/>
    </location>
    <ligand>
        <name>5-phospho-alpha-D-ribose 1-diphosphate</name>
        <dbReference type="ChEBI" id="CHEBI:58017"/>
    </ligand>
</feature>
<feature type="binding site" evidence="1">
    <location>
        <begin position="131"/>
        <end position="139"/>
    </location>
    <ligand>
        <name>5-phospho-alpha-D-ribose 1-diphosphate</name>
        <dbReference type="ChEBI" id="CHEBI:58017"/>
    </ligand>
</feature>
<feature type="binding site" evidence="1">
    <location>
        <position position="194"/>
    </location>
    <ligand>
        <name>uracil</name>
        <dbReference type="ChEBI" id="CHEBI:17568"/>
    </ligand>
</feature>
<feature type="binding site" evidence="1">
    <location>
        <begin position="199"/>
        <end position="201"/>
    </location>
    <ligand>
        <name>uracil</name>
        <dbReference type="ChEBI" id="CHEBI:17568"/>
    </ligand>
</feature>
<feature type="binding site" evidence="1">
    <location>
        <position position="200"/>
    </location>
    <ligand>
        <name>5-phospho-alpha-D-ribose 1-diphosphate</name>
        <dbReference type="ChEBI" id="CHEBI:58017"/>
    </ligand>
</feature>
<dbReference type="EC" id="2.4.2.9" evidence="1"/>
<dbReference type="EMBL" id="AE017194">
    <property type="protein sequence ID" value="AAS44340.1"/>
    <property type="molecule type" value="Genomic_DNA"/>
</dbReference>
<dbReference type="SMR" id="Q72XD8"/>
<dbReference type="KEGG" id="bca:BCE_5440"/>
<dbReference type="HOGENOM" id="CLU_067096_2_2_9"/>
<dbReference type="UniPathway" id="UPA00574">
    <property type="reaction ID" value="UER00636"/>
</dbReference>
<dbReference type="Proteomes" id="UP000002527">
    <property type="component" value="Chromosome"/>
</dbReference>
<dbReference type="GO" id="GO:0005525">
    <property type="term" value="F:GTP binding"/>
    <property type="evidence" value="ECO:0007669"/>
    <property type="project" value="UniProtKB-KW"/>
</dbReference>
<dbReference type="GO" id="GO:0000287">
    <property type="term" value="F:magnesium ion binding"/>
    <property type="evidence" value="ECO:0007669"/>
    <property type="project" value="UniProtKB-UniRule"/>
</dbReference>
<dbReference type="GO" id="GO:0004845">
    <property type="term" value="F:uracil phosphoribosyltransferase activity"/>
    <property type="evidence" value="ECO:0007669"/>
    <property type="project" value="UniProtKB-UniRule"/>
</dbReference>
<dbReference type="GO" id="GO:0044206">
    <property type="term" value="P:UMP salvage"/>
    <property type="evidence" value="ECO:0007669"/>
    <property type="project" value="UniProtKB-UniRule"/>
</dbReference>
<dbReference type="GO" id="GO:0006223">
    <property type="term" value="P:uracil salvage"/>
    <property type="evidence" value="ECO:0007669"/>
    <property type="project" value="InterPro"/>
</dbReference>
<dbReference type="CDD" id="cd06223">
    <property type="entry name" value="PRTases_typeI"/>
    <property type="match status" value="1"/>
</dbReference>
<dbReference type="FunFam" id="3.40.50.2020:FF:000003">
    <property type="entry name" value="Uracil phosphoribosyltransferase"/>
    <property type="match status" value="1"/>
</dbReference>
<dbReference type="Gene3D" id="3.40.50.2020">
    <property type="match status" value="1"/>
</dbReference>
<dbReference type="HAMAP" id="MF_01218_B">
    <property type="entry name" value="Upp_B"/>
    <property type="match status" value="1"/>
</dbReference>
<dbReference type="InterPro" id="IPR000836">
    <property type="entry name" value="PRibTrfase_dom"/>
</dbReference>
<dbReference type="InterPro" id="IPR029057">
    <property type="entry name" value="PRTase-like"/>
</dbReference>
<dbReference type="InterPro" id="IPR034332">
    <property type="entry name" value="Upp_B"/>
</dbReference>
<dbReference type="InterPro" id="IPR050054">
    <property type="entry name" value="UPRTase/APRTase"/>
</dbReference>
<dbReference type="InterPro" id="IPR005765">
    <property type="entry name" value="Ura_phspho_trans"/>
</dbReference>
<dbReference type="NCBIfam" id="NF001097">
    <property type="entry name" value="PRK00129.1"/>
    <property type="match status" value="1"/>
</dbReference>
<dbReference type="NCBIfam" id="TIGR01091">
    <property type="entry name" value="upp"/>
    <property type="match status" value="1"/>
</dbReference>
<dbReference type="PANTHER" id="PTHR32315">
    <property type="entry name" value="ADENINE PHOSPHORIBOSYLTRANSFERASE"/>
    <property type="match status" value="1"/>
</dbReference>
<dbReference type="PANTHER" id="PTHR32315:SF4">
    <property type="entry name" value="URACIL PHOSPHORIBOSYLTRANSFERASE, CHLOROPLASTIC"/>
    <property type="match status" value="1"/>
</dbReference>
<dbReference type="Pfam" id="PF14681">
    <property type="entry name" value="UPRTase"/>
    <property type="match status" value="1"/>
</dbReference>
<dbReference type="SUPFAM" id="SSF53271">
    <property type="entry name" value="PRTase-like"/>
    <property type="match status" value="1"/>
</dbReference>
<accession>Q72XD8</accession>
<evidence type="ECO:0000255" key="1">
    <source>
        <dbReference type="HAMAP-Rule" id="MF_01218"/>
    </source>
</evidence>
<name>UPP_BACC1</name>
<keyword id="KW-0021">Allosteric enzyme</keyword>
<keyword id="KW-0328">Glycosyltransferase</keyword>
<keyword id="KW-0342">GTP-binding</keyword>
<keyword id="KW-0460">Magnesium</keyword>
<keyword id="KW-0547">Nucleotide-binding</keyword>
<keyword id="KW-0808">Transferase</keyword>
<organism>
    <name type="scientific">Bacillus cereus (strain ATCC 10987 / NRS 248)</name>
    <dbReference type="NCBI Taxonomy" id="222523"/>
    <lineage>
        <taxon>Bacteria</taxon>
        <taxon>Bacillati</taxon>
        <taxon>Bacillota</taxon>
        <taxon>Bacilli</taxon>
        <taxon>Bacillales</taxon>
        <taxon>Bacillaceae</taxon>
        <taxon>Bacillus</taxon>
        <taxon>Bacillus cereus group</taxon>
    </lineage>
</organism>
<reference key="1">
    <citation type="journal article" date="2004" name="Nucleic Acids Res.">
        <title>The genome sequence of Bacillus cereus ATCC 10987 reveals metabolic adaptations and a large plasmid related to Bacillus anthracis pXO1.</title>
        <authorList>
            <person name="Rasko D.A."/>
            <person name="Ravel J."/>
            <person name="Oekstad O.A."/>
            <person name="Helgason E."/>
            <person name="Cer R.Z."/>
            <person name="Jiang L."/>
            <person name="Shores K.A."/>
            <person name="Fouts D.E."/>
            <person name="Tourasse N.J."/>
            <person name="Angiuoli S.V."/>
            <person name="Kolonay J.F."/>
            <person name="Nelson W.C."/>
            <person name="Kolstoe A.-B."/>
            <person name="Fraser C.M."/>
            <person name="Read T.D."/>
        </authorList>
    </citation>
    <scope>NUCLEOTIDE SEQUENCE [LARGE SCALE GENOMIC DNA]</scope>
    <source>
        <strain>ATCC 10987 / NRS 248</strain>
    </source>
</reference>
<proteinExistence type="inferred from homology"/>
<sequence length="209" mass="22901">MGKLYVFDHPLIQHKITYIRDKNTGTKDFRELVDEVASLMAFEITRDLPLKDIEIETPVSKATTKVIAGKKLGLIPILRAGLGMVDGILKLIPAAKVGHVGLYRDPKTLQPVEYYVKLPTDVEERDFIVLDPMLATGGSAAEAINSLKKRGAKQIKLMCIVAAPEGVKVVQEEHPDVDIYVAALDEKLNDHGYVVPGLGDAGDRLFGTK</sequence>